<reference key="1">
    <citation type="journal article" date="2003" name="Mol. Microbiol.">
        <title>An integrated analysis of the genome of the hyperthermophilic archaeon Pyrococcus abyssi.</title>
        <authorList>
            <person name="Cohen G.N."/>
            <person name="Barbe V."/>
            <person name="Flament D."/>
            <person name="Galperin M."/>
            <person name="Heilig R."/>
            <person name="Lecompte O."/>
            <person name="Poch O."/>
            <person name="Prieur D."/>
            <person name="Querellou J."/>
            <person name="Ripp R."/>
            <person name="Thierry J.-C."/>
            <person name="Van der Oost J."/>
            <person name="Weissenbach J."/>
            <person name="Zivanovic Y."/>
            <person name="Forterre P."/>
        </authorList>
    </citation>
    <scope>NUCLEOTIDE SEQUENCE [LARGE SCALE GENOMIC DNA]</scope>
    <source>
        <strain>GE5 / Orsay</strain>
    </source>
</reference>
<reference key="2">
    <citation type="journal article" date="2012" name="Curr. Microbiol.">
        <title>Re-annotation of two hyperthermophilic archaea Pyrococcus abyssi GE5 and Pyrococcus furiosus DSM 3638.</title>
        <authorList>
            <person name="Gao J."/>
            <person name="Wang J."/>
        </authorList>
    </citation>
    <scope>GENOME REANNOTATION</scope>
    <source>
        <strain>GE5 / Orsay</strain>
    </source>
</reference>
<sequence length="308" mass="34632">MNWEKFVEEKVKEIRETVGDSKAIIALSGGVDSSTAAVLAYKAIGDKLHAVFVNTGFLRKGEPEFVVKTFRDEFGMNLHYVDAQDRFFSALKGVTDPEEKRKIIGRVFIEVFEEVAREIGAEYLIQGTIAPDWIESQGKIKSHHNVGGLPERLNLKLIEPLRDLYKDEVRELAKFLGLPEKIYNRMPFPGPGLAVRVIGEVTPEKIRIVREANAIVEEEVERAGLRPWQAFAVLLGVKTVGVQGDIRAYKETIAVRIVESLDGMTANAMNVPWEVLQRIAFRITSEIPEVGRVLYDITNKPPATIEFE</sequence>
<gene>
    <name type="primary">guaAB</name>
    <name type="synonym">guaA-C</name>
    <name type="ordered locus">PYRAB08020</name>
    <name type="ORF">PAB2417</name>
</gene>
<evidence type="ECO:0000250" key="1"/>
<evidence type="ECO:0000305" key="2"/>
<feature type="chain" id="PRO_0000140247" description="GMP synthase [glutamine-hydrolyzing] subunit B">
    <location>
        <begin position="1"/>
        <end position="308"/>
    </location>
</feature>
<feature type="domain" description="GMPS ATP-PPase">
    <location>
        <begin position="1"/>
        <end position="185"/>
    </location>
</feature>
<feature type="binding site" evidence="1">
    <location>
        <begin position="28"/>
        <end position="34"/>
    </location>
    <ligand>
        <name>ATP</name>
        <dbReference type="ChEBI" id="CHEBI:30616"/>
    </ligand>
</feature>
<comment type="function">
    <text evidence="1">Catalyzes the synthesis of GMP from XMP.</text>
</comment>
<comment type="catalytic activity">
    <reaction>
        <text>XMP + L-glutamine + ATP + H2O = GMP + L-glutamate + AMP + diphosphate + 2 H(+)</text>
        <dbReference type="Rhea" id="RHEA:11680"/>
        <dbReference type="ChEBI" id="CHEBI:15377"/>
        <dbReference type="ChEBI" id="CHEBI:15378"/>
        <dbReference type="ChEBI" id="CHEBI:29985"/>
        <dbReference type="ChEBI" id="CHEBI:30616"/>
        <dbReference type="ChEBI" id="CHEBI:33019"/>
        <dbReference type="ChEBI" id="CHEBI:57464"/>
        <dbReference type="ChEBI" id="CHEBI:58115"/>
        <dbReference type="ChEBI" id="CHEBI:58359"/>
        <dbReference type="ChEBI" id="CHEBI:456215"/>
        <dbReference type="EC" id="6.3.5.2"/>
    </reaction>
</comment>
<comment type="pathway">
    <text>Purine metabolism; GMP biosynthesis; GMP from XMP (L-Gln route): step 1/1.</text>
</comment>
<comment type="subunit">
    <text evidence="2">Heterodimer composed of a glutamine amidotransferase subunit (A) and a GMP-binding subunit (B).</text>
</comment>
<dbReference type="EC" id="6.3.5.2"/>
<dbReference type="EMBL" id="AJ248285">
    <property type="protein sequence ID" value="CAB49716.1"/>
    <property type="molecule type" value="Genomic_DNA"/>
</dbReference>
<dbReference type="EMBL" id="HE613800">
    <property type="protein sequence ID" value="CCE70202.1"/>
    <property type="molecule type" value="Genomic_DNA"/>
</dbReference>
<dbReference type="PIR" id="C75125">
    <property type="entry name" value="C75125"/>
</dbReference>
<dbReference type="RefSeq" id="WP_010867924.1">
    <property type="nucleotide sequence ID" value="NC_000868.1"/>
</dbReference>
<dbReference type="SMR" id="Q9V0I7"/>
<dbReference type="STRING" id="272844.PAB2417"/>
<dbReference type="KEGG" id="pab:PAB2417"/>
<dbReference type="PATRIC" id="fig|272844.11.peg.845"/>
<dbReference type="eggNOG" id="arCOG00085">
    <property type="taxonomic scope" value="Archaea"/>
</dbReference>
<dbReference type="HOGENOM" id="CLU_014340_0_0_2"/>
<dbReference type="OrthoDB" id="33844at2157"/>
<dbReference type="PhylomeDB" id="Q9V0I7"/>
<dbReference type="UniPathway" id="UPA00189">
    <property type="reaction ID" value="UER00296"/>
</dbReference>
<dbReference type="Proteomes" id="UP000000810">
    <property type="component" value="Chromosome"/>
</dbReference>
<dbReference type="Proteomes" id="UP000009139">
    <property type="component" value="Chromosome"/>
</dbReference>
<dbReference type="GO" id="GO:0005829">
    <property type="term" value="C:cytosol"/>
    <property type="evidence" value="ECO:0007669"/>
    <property type="project" value="TreeGrafter"/>
</dbReference>
<dbReference type="GO" id="GO:0005524">
    <property type="term" value="F:ATP binding"/>
    <property type="evidence" value="ECO:0007669"/>
    <property type="project" value="UniProtKB-UniRule"/>
</dbReference>
<dbReference type="GO" id="GO:0003921">
    <property type="term" value="F:GMP synthase activity"/>
    <property type="evidence" value="ECO:0007669"/>
    <property type="project" value="InterPro"/>
</dbReference>
<dbReference type="CDD" id="cd01997">
    <property type="entry name" value="GMP_synthase_C"/>
    <property type="match status" value="1"/>
</dbReference>
<dbReference type="FunFam" id="3.30.300.10:FF:000002">
    <property type="entry name" value="GMP synthase [glutamine-hydrolyzing]"/>
    <property type="match status" value="1"/>
</dbReference>
<dbReference type="FunFam" id="3.40.50.620:FF:000208">
    <property type="entry name" value="GMP synthase [glutamine-hydrolyzing] subunit B"/>
    <property type="match status" value="1"/>
</dbReference>
<dbReference type="Gene3D" id="3.30.300.10">
    <property type="match status" value="1"/>
</dbReference>
<dbReference type="Gene3D" id="3.40.50.620">
    <property type="entry name" value="HUPs"/>
    <property type="match status" value="1"/>
</dbReference>
<dbReference type="HAMAP" id="MF_00345">
    <property type="entry name" value="GMP_synthase_B"/>
    <property type="match status" value="1"/>
</dbReference>
<dbReference type="InterPro" id="IPR001674">
    <property type="entry name" value="GMP_synth_C"/>
</dbReference>
<dbReference type="InterPro" id="IPR026598">
    <property type="entry name" value="GMP_synthase_B"/>
</dbReference>
<dbReference type="InterPro" id="IPR025777">
    <property type="entry name" value="GMPS_ATP_PPase_dom"/>
</dbReference>
<dbReference type="InterPro" id="IPR022310">
    <property type="entry name" value="NAD/GMP_synthase"/>
</dbReference>
<dbReference type="InterPro" id="IPR014729">
    <property type="entry name" value="Rossmann-like_a/b/a_fold"/>
</dbReference>
<dbReference type="NCBIfam" id="TIGR00884">
    <property type="entry name" value="guaA_Cterm"/>
    <property type="match status" value="1"/>
</dbReference>
<dbReference type="NCBIfam" id="NF000848">
    <property type="entry name" value="PRK00074.1"/>
    <property type="match status" value="1"/>
</dbReference>
<dbReference type="PANTHER" id="PTHR11922:SF2">
    <property type="entry name" value="GMP SYNTHASE [GLUTAMINE-HYDROLYZING]"/>
    <property type="match status" value="1"/>
</dbReference>
<dbReference type="PANTHER" id="PTHR11922">
    <property type="entry name" value="GMP SYNTHASE-RELATED"/>
    <property type="match status" value="1"/>
</dbReference>
<dbReference type="Pfam" id="PF00958">
    <property type="entry name" value="GMP_synt_C"/>
    <property type="match status" value="1"/>
</dbReference>
<dbReference type="Pfam" id="PF02540">
    <property type="entry name" value="NAD_synthase"/>
    <property type="match status" value="1"/>
</dbReference>
<dbReference type="SUPFAM" id="SSF52402">
    <property type="entry name" value="Adenine nucleotide alpha hydrolases-like"/>
    <property type="match status" value="1"/>
</dbReference>
<dbReference type="SUPFAM" id="SSF54810">
    <property type="entry name" value="GMP synthetase C-terminal dimerisation domain"/>
    <property type="match status" value="1"/>
</dbReference>
<dbReference type="PROSITE" id="PS51553">
    <property type="entry name" value="GMPS_ATP_PPASE"/>
    <property type="match status" value="1"/>
</dbReference>
<proteinExistence type="inferred from homology"/>
<accession>Q9V0I7</accession>
<accession>G8ZH07</accession>
<keyword id="KW-0067">ATP-binding</keyword>
<keyword id="KW-0332">GMP biosynthesis</keyword>
<keyword id="KW-0436">Ligase</keyword>
<keyword id="KW-0547">Nucleotide-binding</keyword>
<keyword id="KW-0658">Purine biosynthesis</keyword>
<organism>
    <name type="scientific">Pyrococcus abyssi (strain GE5 / Orsay)</name>
    <dbReference type="NCBI Taxonomy" id="272844"/>
    <lineage>
        <taxon>Archaea</taxon>
        <taxon>Methanobacteriati</taxon>
        <taxon>Methanobacteriota</taxon>
        <taxon>Thermococci</taxon>
        <taxon>Thermococcales</taxon>
        <taxon>Thermococcaceae</taxon>
        <taxon>Pyrococcus</taxon>
    </lineage>
</organism>
<protein>
    <recommendedName>
        <fullName>GMP synthase [glutamine-hydrolyzing] subunit B</fullName>
        <ecNumber>6.3.5.2</ecNumber>
    </recommendedName>
    <alternativeName>
        <fullName>GMP synthetase</fullName>
    </alternativeName>
</protein>
<name>GUAAB_PYRAB</name>